<organism>
    <name type="scientific">Aspergillus clavatus (strain ATCC 1007 / CBS 513.65 / DSM 816 / NCTC 3887 / NRRL 1 / QM 1276 / 107)</name>
    <dbReference type="NCBI Taxonomy" id="344612"/>
    <lineage>
        <taxon>Eukaryota</taxon>
        <taxon>Fungi</taxon>
        <taxon>Dikarya</taxon>
        <taxon>Ascomycota</taxon>
        <taxon>Pezizomycotina</taxon>
        <taxon>Eurotiomycetes</taxon>
        <taxon>Eurotiomycetidae</taxon>
        <taxon>Eurotiales</taxon>
        <taxon>Aspergillaceae</taxon>
        <taxon>Aspergillus</taxon>
        <taxon>Aspergillus subgen. Fumigati</taxon>
    </lineage>
</organism>
<evidence type="ECO:0000250" key="1"/>
<evidence type="ECO:0000255" key="2"/>
<evidence type="ECO:0000305" key="3"/>
<feature type="signal peptide" evidence="2">
    <location>
        <begin position="1"/>
        <end position="18"/>
    </location>
</feature>
<feature type="chain" id="PRO_0000411227" description="Probable carboxypeptidase ACLA_088580">
    <location>
        <begin position="19"/>
        <end position="452"/>
    </location>
</feature>
<feature type="active site" description="Proton acceptor" evidence="1">
    <location>
        <position position="207"/>
    </location>
</feature>
<feature type="binding site" evidence="1">
    <location>
        <position position="175"/>
    </location>
    <ligand>
        <name>Zn(2+)</name>
        <dbReference type="ChEBI" id="CHEBI:29105"/>
        <label>1</label>
    </ligand>
</feature>
<feature type="binding site" evidence="1">
    <location>
        <position position="175"/>
    </location>
    <ligand>
        <name>Zn(2+)</name>
        <dbReference type="ChEBI" id="CHEBI:29105"/>
        <label>2</label>
    </ligand>
</feature>
<feature type="binding site" evidence="1">
    <location>
        <position position="208"/>
    </location>
    <ligand>
        <name>Zn(2+)</name>
        <dbReference type="ChEBI" id="CHEBI:29105"/>
        <label>1</label>
    </ligand>
</feature>
<feature type="glycosylation site" description="N-linked (GlcNAc...) asparagine" evidence="2">
    <location>
        <position position="107"/>
    </location>
</feature>
<feature type="glycosylation site" description="N-linked (GlcNAc...) asparagine" evidence="2">
    <location>
        <position position="156"/>
    </location>
</feature>
<dbReference type="EC" id="3.4.17.-"/>
<dbReference type="EMBL" id="DS027052">
    <property type="protein sequence ID" value="EAW11169.1"/>
    <property type="molecule type" value="Genomic_DNA"/>
</dbReference>
<dbReference type="RefSeq" id="XP_001272595.1">
    <property type="nucleotide sequence ID" value="XM_001272594.1"/>
</dbReference>
<dbReference type="SMR" id="A1CE70"/>
<dbReference type="STRING" id="344612.A1CE70"/>
<dbReference type="EnsemblFungi" id="EAW11169">
    <property type="protein sequence ID" value="EAW11169"/>
    <property type="gene ID" value="ACLA_088580"/>
</dbReference>
<dbReference type="GeneID" id="4705004"/>
<dbReference type="KEGG" id="act:ACLA_088580"/>
<dbReference type="VEuPathDB" id="FungiDB:ACLA_088580"/>
<dbReference type="eggNOG" id="KOG2275">
    <property type="taxonomic scope" value="Eukaryota"/>
</dbReference>
<dbReference type="HOGENOM" id="CLU_021802_3_0_1"/>
<dbReference type="OMA" id="RLHKGVM"/>
<dbReference type="OrthoDB" id="3064516at2759"/>
<dbReference type="Proteomes" id="UP000006701">
    <property type="component" value="Unassembled WGS sequence"/>
</dbReference>
<dbReference type="GO" id="GO:0005576">
    <property type="term" value="C:extracellular region"/>
    <property type="evidence" value="ECO:0007669"/>
    <property type="project" value="UniProtKB-SubCell"/>
</dbReference>
<dbReference type="GO" id="GO:0046872">
    <property type="term" value="F:metal ion binding"/>
    <property type="evidence" value="ECO:0007669"/>
    <property type="project" value="UniProtKB-KW"/>
</dbReference>
<dbReference type="GO" id="GO:0008233">
    <property type="term" value="F:peptidase activity"/>
    <property type="evidence" value="ECO:0007669"/>
    <property type="project" value="UniProtKB-KW"/>
</dbReference>
<dbReference type="GO" id="GO:0006508">
    <property type="term" value="P:proteolysis"/>
    <property type="evidence" value="ECO:0007669"/>
    <property type="project" value="UniProtKB-KW"/>
</dbReference>
<dbReference type="Gene3D" id="3.30.70.360">
    <property type="match status" value="1"/>
</dbReference>
<dbReference type="Gene3D" id="3.40.630.10">
    <property type="entry name" value="Zn peptidases"/>
    <property type="match status" value="1"/>
</dbReference>
<dbReference type="InterPro" id="IPR001261">
    <property type="entry name" value="ArgE/DapE_CS"/>
</dbReference>
<dbReference type="InterPro" id="IPR036264">
    <property type="entry name" value="Bact_exopeptidase_dim_dom"/>
</dbReference>
<dbReference type="InterPro" id="IPR002933">
    <property type="entry name" value="Peptidase_M20"/>
</dbReference>
<dbReference type="InterPro" id="IPR011650">
    <property type="entry name" value="Peptidase_M20_dimer"/>
</dbReference>
<dbReference type="InterPro" id="IPR050072">
    <property type="entry name" value="Peptidase_M20A"/>
</dbReference>
<dbReference type="PANTHER" id="PTHR43808">
    <property type="entry name" value="ACETYLORNITHINE DEACETYLASE"/>
    <property type="match status" value="1"/>
</dbReference>
<dbReference type="PANTHER" id="PTHR43808:SF8">
    <property type="entry name" value="PEPTIDASE M20 DIMERISATION DOMAIN-CONTAINING PROTEIN"/>
    <property type="match status" value="1"/>
</dbReference>
<dbReference type="Pfam" id="PF07687">
    <property type="entry name" value="M20_dimer"/>
    <property type="match status" value="1"/>
</dbReference>
<dbReference type="Pfam" id="PF01546">
    <property type="entry name" value="Peptidase_M20"/>
    <property type="match status" value="1"/>
</dbReference>
<dbReference type="SUPFAM" id="SSF55031">
    <property type="entry name" value="Bacterial exopeptidase dimerisation domain"/>
    <property type="match status" value="1"/>
</dbReference>
<dbReference type="SUPFAM" id="SSF53187">
    <property type="entry name" value="Zn-dependent exopeptidases"/>
    <property type="match status" value="1"/>
</dbReference>
<dbReference type="PROSITE" id="PS00758">
    <property type="entry name" value="ARGE_DAPE_CPG2_1"/>
    <property type="match status" value="1"/>
</dbReference>
<dbReference type="PROSITE" id="PS00759">
    <property type="entry name" value="ARGE_DAPE_CPG2_2"/>
    <property type="match status" value="1"/>
</dbReference>
<gene>
    <name type="ORF">ACLA_088580</name>
</gene>
<name>P20D1_ASPCL</name>
<reference key="1">
    <citation type="journal article" date="2008" name="PLoS Genet.">
        <title>Genomic islands in the pathogenic filamentous fungus Aspergillus fumigatus.</title>
        <authorList>
            <person name="Fedorova N.D."/>
            <person name="Khaldi N."/>
            <person name="Joardar V.S."/>
            <person name="Maiti R."/>
            <person name="Amedeo P."/>
            <person name="Anderson M.J."/>
            <person name="Crabtree J."/>
            <person name="Silva J.C."/>
            <person name="Badger J.H."/>
            <person name="Albarraq A."/>
            <person name="Angiuoli S."/>
            <person name="Bussey H."/>
            <person name="Bowyer P."/>
            <person name="Cotty P.J."/>
            <person name="Dyer P.S."/>
            <person name="Egan A."/>
            <person name="Galens K."/>
            <person name="Fraser-Liggett C.M."/>
            <person name="Haas B.J."/>
            <person name="Inman J.M."/>
            <person name="Kent R."/>
            <person name="Lemieux S."/>
            <person name="Malavazi I."/>
            <person name="Orvis J."/>
            <person name="Roemer T."/>
            <person name="Ronning C.M."/>
            <person name="Sundaram J.P."/>
            <person name="Sutton G."/>
            <person name="Turner G."/>
            <person name="Venter J.C."/>
            <person name="White O.R."/>
            <person name="Whitty B.R."/>
            <person name="Youngman P."/>
            <person name="Wolfe K.H."/>
            <person name="Goldman G.H."/>
            <person name="Wortman J.R."/>
            <person name="Jiang B."/>
            <person name="Denning D.W."/>
            <person name="Nierman W.C."/>
        </authorList>
    </citation>
    <scope>NUCLEOTIDE SEQUENCE [LARGE SCALE GENOMIC DNA]</scope>
    <source>
        <strain>ATCC 1007 / CBS 513.65 / DSM 816 / NCTC 3887 / NRRL 1 / QM 1276 / 107</strain>
    </source>
</reference>
<accession>A1CE70</accession>
<protein>
    <recommendedName>
        <fullName>Probable carboxypeptidase ACLA_088580</fullName>
        <ecNumber>3.4.17.-</ecNumber>
    </recommendedName>
    <alternativeName>
        <fullName>Peptidase M20 domain-containing protein ACLA_088580</fullName>
    </alternativeName>
</protein>
<comment type="cofactor">
    <cofactor evidence="1">
        <name>Zn(2+)</name>
        <dbReference type="ChEBI" id="CHEBI:29105"/>
    </cofactor>
    <text evidence="1">Binds 2 Zn(2+) ions per subunit.</text>
</comment>
<comment type="subcellular location">
    <subcellularLocation>
        <location evidence="3">Secreted</location>
    </subcellularLocation>
</comment>
<comment type="similarity">
    <text evidence="3">Belongs to the peptidase M20A family.</text>
</comment>
<keyword id="KW-0325">Glycoprotein</keyword>
<keyword id="KW-0378">Hydrolase</keyword>
<keyword id="KW-0479">Metal-binding</keyword>
<keyword id="KW-0645">Protease</keyword>
<keyword id="KW-1185">Reference proteome</keyword>
<keyword id="KW-0964">Secreted</keyword>
<keyword id="KW-0732">Signal</keyword>
<keyword id="KW-0862">Zinc</keyword>
<proteinExistence type="inferred from homology"/>
<sequence>MRSLTLLLSLSTALRSVAAPHPASPQGQIPLGGIPSASTSEVGIGIGIGIEEDPFPPAAGSGHNDLEDVINASPLLSFHRDLVSIESISGHEARAAAFVADFLEAHNFTVVKQPVAGDRVNIFASPRAHAHSRPEILLTSHLDTVPPFIPYSLHRNDSRPTDRQLIRIAGRGAVDAKASVAAQIFAALDILHADPSAPLGLLFVVGEEVGGDGMKAFSHDPRLNPAPSRFHTVIFGEPTDFALVAGHKGMLGFEVLASGRPAHSGYPWLGRSAVSAILPALRRVDALGHIPVHHGGLPASHKYGRTTLNIGVLEGGVATNVVPAAARADVAVRLAAGSVDDARAIIAAAVADATHRDPAVVVDFSRHLEAYPPQDLDVDVPGFEITTVNYGTDVPNLHLHPRPDGPVKRYLYGPGSIFVAHGENEGLTVGALEEAVGGYKKLVQAALERTRA</sequence>